<evidence type="ECO:0000255" key="1">
    <source>
        <dbReference type="HAMAP-Rule" id="MF_00036"/>
    </source>
</evidence>
<keyword id="KW-0030">Aminoacyl-tRNA synthetase</keyword>
<keyword id="KW-0067">ATP-binding</keyword>
<keyword id="KW-0963">Cytoplasm</keyword>
<keyword id="KW-0436">Ligase</keyword>
<keyword id="KW-0479">Metal-binding</keyword>
<keyword id="KW-0547">Nucleotide-binding</keyword>
<keyword id="KW-0648">Protein biosynthesis</keyword>
<keyword id="KW-0694">RNA-binding</keyword>
<keyword id="KW-0820">tRNA-binding</keyword>
<keyword id="KW-0862">Zinc</keyword>
<accession>A3MJ36</accession>
<protein>
    <recommendedName>
        <fullName evidence="1">Alanine--tRNA ligase</fullName>
        <ecNumber evidence="1">6.1.1.7</ecNumber>
    </recommendedName>
    <alternativeName>
        <fullName evidence="1">Alanyl-tRNA synthetase</fullName>
        <shortName evidence="1">AlaRS</shortName>
    </alternativeName>
</protein>
<organism>
    <name type="scientific">Burkholderia mallei (strain NCTC 10247)</name>
    <dbReference type="NCBI Taxonomy" id="320389"/>
    <lineage>
        <taxon>Bacteria</taxon>
        <taxon>Pseudomonadati</taxon>
        <taxon>Pseudomonadota</taxon>
        <taxon>Betaproteobacteria</taxon>
        <taxon>Burkholderiales</taxon>
        <taxon>Burkholderiaceae</taxon>
        <taxon>Burkholderia</taxon>
        <taxon>pseudomallei group</taxon>
    </lineage>
</organism>
<proteinExistence type="inferred from homology"/>
<feature type="chain" id="PRO_0000347525" description="Alanine--tRNA ligase">
    <location>
        <begin position="1"/>
        <end position="874"/>
    </location>
</feature>
<feature type="binding site" evidence="1">
    <location>
        <position position="564"/>
    </location>
    <ligand>
        <name>Zn(2+)</name>
        <dbReference type="ChEBI" id="CHEBI:29105"/>
    </ligand>
</feature>
<feature type="binding site" evidence="1">
    <location>
        <position position="568"/>
    </location>
    <ligand>
        <name>Zn(2+)</name>
        <dbReference type="ChEBI" id="CHEBI:29105"/>
    </ligand>
</feature>
<feature type="binding site" evidence="1">
    <location>
        <position position="665"/>
    </location>
    <ligand>
        <name>Zn(2+)</name>
        <dbReference type="ChEBI" id="CHEBI:29105"/>
    </ligand>
</feature>
<feature type="binding site" evidence="1">
    <location>
        <position position="669"/>
    </location>
    <ligand>
        <name>Zn(2+)</name>
        <dbReference type="ChEBI" id="CHEBI:29105"/>
    </ligand>
</feature>
<reference key="1">
    <citation type="journal article" date="2010" name="Genome Biol. Evol.">
        <title>Continuing evolution of Burkholderia mallei through genome reduction and large-scale rearrangements.</title>
        <authorList>
            <person name="Losada L."/>
            <person name="Ronning C.M."/>
            <person name="DeShazer D."/>
            <person name="Woods D."/>
            <person name="Fedorova N."/>
            <person name="Kim H.S."/>
            <person name="Shabalina S.A."/>
            <person name="Pearson T.R."/>
            <person name="Brinkac L."/>
            <person name="Tan P."/>
            <person name="Nandi T."/>
            <person name="Crabtree J."/>
            <person name="Badger J."/>
            <person name="Beckstrom-Sternberg S."/>
            <person name="Saqib M."/>
            <person name="Schutzer S.E."/>
            <person name="Keim P."/>
            <person name="Nierman W.C."/>
        </authorList>
    </citation>
    <scope>NUCLEOTIDE SEQUENCE [LARGE SCALE GENOMIC DNA]</scope>
    <source>
        <strain>NCTC 10247</strain>
    </source>
</reference>
<comment type="function">
    <text evidence="1">Catalyzes the attachment of alanine to tRNA(Ala) in a two-step reaction: alanine is first activated by ATP to form Ala-AMP and then transferred to the acceptor end of tRNA(Ala). Also edits incorrectly charged Ser-tRNA(Ala) and Gly-tRNA(Ala) via its editing domain.</text>
</comment>
<comment type="catalytic activity">
    <reaction evidence="1">
        <text>tRNA(Ala) + L-alanine + ATP = L-alanyl-tRNA(Ala) + AMP + diphosphate</text>
        <dbReference type="Rhea" id="RHEA:12540"/>
        <dbReference type="Rhea" id="RHEA-COMP:9657"/>
        <dbReference type="Rhea" id="RHEA-COMP:9923"/>
        <dbReference type="ChEBI" id="CHEBI:30616"/>
        <dbReference type="ChEBI" id="CHEBI:33019"/>
        <dbReference type="ChEBI" id="CHEBI:57972"/>
        <dbReference type="ChEBI" id="CHEBI:78442"/>
        <dbReference type="ChEBI" id="CHEBI:78497"/>
        <dbReference type="ChEBI" id="CHEBI:456215"/>
        <dbReference type="EC" id="6.1.1.7"/>
    </reaction>
</comment>
<comment type="cofactor">
    <cofactor evidence="1">
        <name>Zn(2+)</name>
        <dbReference type="ChEBI" id="CHEBI:29105"/>
    </cofactor>
    <text evidence="1">Binds 1 zinc ion per subunit.</text>
</comment>
<comment type="subcellular location">
    <subcellularLocation>
        <location evidence="1">Cytoplasm</location>
    </subcellularLocation>
</comment>
<comment type="domain">
    <text evidence="1">Consists of three domains; the N-terminal catalytic domain, the editing domain and the C-terminal C-Ala domain. The editing domain removes incorrectly charged amino acids, while the C-Ala domain, along with tRNA(Ala), serves as a bridge to cooperatively bring together the editing and aminoacylation centers thus stimulating deacylation of misacylated tRNAs.</text>
</comment>
<comment type="similarity">
    <text evidence="1">Belongs to the class-II aminoacyl-tRNA synthetase family.</text>
</comment>
<sequence>MKAAEIREKFLKFFESKGHTIVRSSSLVPGNDPTLLFTNSGMVQFKDVFLGAETRPYSRATTAQRSVRAGGKHNDLENVGYTARHHTFFEMLGNFSFGDYFKRDAIHYAWELLTSVYKLPADKLWVTVYHDDDEAYDIWAKEVGVPAERIIRIGDNKGARYASDNFWQMGDTGPCGPCSEIFYDHGPDVWGGPPGSPEEDGDRYIEIWNLVFMQFNRDAQGNMTRLPKPCVDTGMGLERIAAVLQHVHSNYEIDLFQQLIKASARETGVADLANNSLKVIADHIRACSFLIVDGVIPGNEGRGYVLRRIVRRAIRHGYKLGRKAPFFHKLVADLVAEMGAAYPELKEAEPRVTDVLRQEEERFFETIEHGMSILEAALAELDAAGGKTLDGELAFKLHDTYGFPLDLTADVCRERGVTVDEPAFDDAMARQREQARAAGKFKATQGLEYTGAKTTFHGYEEIAFDDAKVVALYVEGASVGEVKAGESAVVVLDHTPFYAESGGQVGDQGVLANAATRFAVGDTLKVQADVIGHHGELEQGTLKVGDVVRAEIDAARRARTARNHSATHLMHKALRDVLGSHVQQKGSLVDADKTRFDFAHNAPLTDDEIRRVEAIVNEQVLANAPGIVRVMPYDDAVKGGAMALFGEKYGDEVRVLDLGFSRELCGGTHVHRTGDIGLFKIVAEGGVAAGIRRVEAITGDNAVRYVQALDARVNAAAAALKAQPSELLQRIGQVQDQVKSLEKELGALKSKLASSQGDELAQQAVEVGGVHVLAATLDGADAKTLRETVDKLKDKLKSAAIVLAAVDGGKVSLIAGVTADASKKVKAGELVNFVAQQVGGKGGGRPDMAQAGGTEPAKLPAALAGVKGWVEARL</sequence>
<dbReference type="EC" id="6.1.1.7" evidence="1"/>
<dbReference type="EMBL" id="CP000548">
    <property type="protein sequence ID" value="ABO05351.1"/>
    <property type="molecule type" value="Genomic_DNA"/>
</dbReference>
<dbReference type="RefSeq" id="WP_004204967.1">
    <property type="nucleotide sequence ID" value="NZ_CP007802.1"/>
</dbReference>
<dbReference type="SMR" id="A3MJ36"/>
<dbReference type="GeneID" id="93059980"/>
<dbReference type="KEGG" id="bmaz:BM44_2355"/>
<dbReference type="KEGG" id="bmn:BMA10247_0705"/>
<dbReference type="PATRIC" id="fig|320389.8.peg.2640"/>
<dbReference type="GO" id="GO:0005829">
    <property type="term" value="C:cytosol"/>
    <property type="evidence" value="ECO:0007669"/>
    <property type="project" value="TreeGrafter"/>
</dbReference>
<dbReference type="GO" id="GO:0004813">
    <property type="term" value="F:alanine-tRNA ligase activity"/>
    <property type="evidence" value="ECO:0007669"/>
    <property type="project" value="UniProtKB-UniRule"/>
</dbReference>
<dbReference type="GO" id="GO:0002161">
    <property type="term" value="F:aminoacyl-tRNA deacylase activity"/>
    <property type="evidence" value="ECO:0007669"/>
    <property type="project" value="TreeGrafter"/>
</dbReference>
<dbReference type="GO" id="GO:0005524">
    <property type="term" value="F:ATP binding"/>
    <property type="evidence" value="ECO:0007669"/>
    <property type="project" value="UniProtKB-UniRule"/>
</dbReference>
<dbReference type="GO" id="GO:0000049">
    <property type="term" value="F:tRNA binding"/>
    <property type="evidence" value="ECO:0007669"/>
    <property type="project" value="UniProtKB-KW"/>
</dbReference>
<dbReference type="GO" id="GO:0008270">
    <property type="term" value="F:zinc ion binding"/>
    <property type="evidence" value="ECO:0007669"/>
    <property type="project" value="UniProtKB-UniRule"/>
</dbReference>
<dbReference type="GO" id="GO:0006419">
    <property type="term" value="P:alanyl-tRNA aminoacylation"/>
    <property type="evidence" value="ECO:0007669"/>
    <property type="project" value="UniProtKB-UniRule"/>
</dbReference>
<dbReference type="GO" id="GO:0045892">
    <property type="term" value="P:negative regulation of DNA-templated transcription"/>
    <property type="evidence" value="ECO:0007669"/>
    <property type="project" value="TreeGrafter"/>
</dbReference>
<dbReference type="CDD" id="cd00673">
    <property type="entry name" value="AlaRS_core"/>
    <property type="match status" value="1"/>
</dbReference>
<dbReference type="FunFam" id="2.40.30.130:FF:000001">
    <property type="entry name" value="Alanine--tRNA ligase"/>
    <property type="match status" value="1"/>
</dbReference>
<dbReference type="FunFam" id="3.10.310.40:FF:000001">
    <property type="entry name" value="Alanine--tRNA ligase"/>
    <property type="match status" value="1"/>
</dbReference>
<dbReference type="FunFam" id="3.30.54.20:FF:000001">
    <property type="entry name" value="Alanine--tRNA ligase"/>
    <property type="match status" value="1"/>
</dbReference>
<dbReference type="FunFam" id="3.30.930.10:FF:000004">
    <property type="entry name" value="Alanine--tRNA ligase"/>
    <property type="match status" value="1"/>
</dbReference>
<dbReference type="FunFam" id="3.30.980.10:FF:000004">
    <property type="entry name" value="Alanine--tRNA ligase, cytoplasmic"/>
    <property type="match status" value="1"/>
</dbReference>
<dbReference type="Gene3D" id="2.40.30.130">
    <property type="match status" value="1"/>
</dbReference>
<dbReference type="Gene3D" id="3.10.310.40">
    <property type="match status" value="1"/>
</dbReference>
<dbReference type="Gene3D" id="3.30.54.20">
    <property type="match status" value="1"/>
</dbReference>
<dbReference type="Gene3D" id="6.10.250.550">
    <property type="match status" value="1"/>
</dbReference>
<dbReference type="Gene3D" id="3.30.930.10">
    <property type="entry name" value="Bira Bifunctional Protein, Domain 2"/>
    <property type="match status" value="1"/>
</dbReference>
<dbReference type="Gene3D" id="3.30.980.10">
    <property type="entry name" value="Threonyl-trna Synthetase, Chain A, domain 2"/>
    <property type="match status" value="1"/>
</dbReference>
<dbReference type="HAMAP" id="MF_00036_B">
    <property type="entry name" value="Ala_tRNA_synth_B"/>
    <property type="match status" value="1"/>
</dbReference>
<dbReference type="InterPro" id="IPR045864">
    <property type="entry name" value="aa-tRNA-synth_II/BPL/LPL"/>
</dbReference>
<dbReference type="InterPro" id="IPR002318">
    <property type="entry name" value="Ala-tRNA-lgiase_IIc"/>
</dbReference>
<dbReference type="InterPro" id="IPR018162">
    <property type="entry name" value="Ala-tRNA-ligase_IIc_anticod-bd"/>
</dbReference>
<dbReference type="InterPro" id="IPR018165">
    <property type="entry name" value="Ala-tRNA-synth_IIc_core"/>
</dbReference>
<dbReference type="InterPro" id="IPR018164">
    <property type="entry name" value="Ala-tRNA-synth_IIc_N"/>
</dbReference>
<dbReference type="InterPro" id="IPR050058">
    <property type="entry name" value="Ala-tRNA_ligase"/>
</dbReference>
<dbReference type="InterPro" id="IPR023033">
    <property type="entry name" value="Ala_tRNA_ligase_euk/bac"/>
</dbReference>
<dbReference type="InterPro" id="IPR003156">
    <property type="entry name" value="DHHA1_dom"/>
</dbReference>
<dbReference type="InterPro" id="IPR018163">
    <property type="entry name" value="Thr/Ala-tRNA-synth_IIc_edit"/>
</dbReference>
<dbReference type="InterPro" id="IPR009000">
    <property type="entry name" value="Transl_B-barrel_sf"/>
</dbReference>
<dbReference type="InterPro" id="IPR012947">
    <property type="entry name" value="tRNA_SAD"/>
</dbReference>
<dbReference type="NCBIfam" id="TIGR00344">
    <property type="entry name" value="alaS"/>
    <property type="match status" value="1"/>
</dbReference>
<dbReference type="PANTHER" id="PTHR11777:SF9">
    <property type="entry name" value="ALANINE--TRNA LIGASE, CYTOPLASMIC"/>
    <property type="match status" value="1"/>
</dbReference>
<dbReference type="PANTHER" id="PTHR11777">
    <property type="entry name" value="ALANYL-TRNA SYNTHETASE"/>
    <property type="match status" value="1"/>
</dbReference>
<dbReference type="Pfam" id="PF02272">
    <property type="entry name" value="DHHA1"/>
    <property type="match status" value="1"/>
</dbReference>
<dbReference type="Pfam" id="PF01411">
    <property type="entry name" value="tRNA-synt_2c"/>
    <property type="match status" value="1"/>
</dbReference>
<dbReference type="Pfam" id="PF07973">
    <property type="entry name" value="tRNA_SAD"/>
    <property type="match status" value="1"/>
</dbReference>
<dbReference type="PRINTS" id="PR00980">
    <property type="entry name" value="TRNASYNTHALA"/>
</dbReference>
<dbReference type="SMART" id="SM00863">
    <property type="entry name" value="tRNA_SAD"/>
    <property type="match status" value="1"/>
</dbReference>
<dbReference type="SUPFAM" id="SSF55681">
    <property type="entry name" value="Class II aaRS and biotin synthetases"/>
    <property type="match status" value="1"/>
</dbReference>
<dbReference type="SUPFAM" id="SSF101353">
    <property type="entry name" value="Putative anticodon-binding domain of alanyl-tRNA synthetase (AlaRS)"/>
    <property type="match status" value="1"/>
</dbReference>
<dbReference type="SUPFAM" id="SSF55186">
    <property type="entry name" value="ThrRS/AlaRS common domain"/>
    <property type="match status" value="1"/>
</dbReference>
<dbReference type="SUPFAM" id="SSF50447">
    <property type="entry name" value="Translation proteins"/>
    <property type="match status" value="1"/>
</dbReference>
<dbReference type="PROSITE" id="PS50860">
    <property type="entry name" value="AA_TRNA_LIGASE_II_ALA"/>
    <property type="match status" value="1"/>
</dbReference>
<gene>
    <name evidence="1" type="primary">alaS</name>
    <name type="ordered locus">BMA10247_0705</name>
</gene>
<name>SYA_BURM7</name>